<feature type="chain" id="PRO_0000402934" description="Putative carbamate hydrolase RutD">
    <location>
        <begin position="1"/>
        <end position="268"/>
    </location>
</feature>
<feature type="domain" description="AB hydrolase-1" evidence="1">
    <location>
        <begin position="15"/>
        <end position="119"/>
    </location>
</feature>
<comment type="function">
    <text evidence="1">Involved in pyrimidine catabolism. May facilitate the hydrolysis of carbamate, a reaction that can also occur spontaneously.</text>
</comment>
<comment type="catalytic activity">
    <reaction evidence="1">
        <text>carbamate + 2 H(+) = NH4(+) + CO2</text>
        <dbReference type="Rhea" id="RHEA:15649"/>
        <dbReference type="ChEBI" id="CHEBI:13941"/>
        <dbReference type="ChEBI" id="CHEBI:15378"/>
        <dbReference type="ChEBI" id="CHEBI:16526"/>
        <dbReference type="ChEBI" id="CHEBI:28938"/>
    </reaction>
</comment>
<comment type="similarity">
    <text evidence="1">Belongs to the AB hydrolase superfamily. Hydrolase RutD family.</text>
</comment>
<sequence>MMKLRVSEAPFPGAPVMVMIAGLGGLGGYWLAQQSALSRDYQVVVYDQRGTGDNADTLPEGYTLADMAQELHRALLIHGVHRYAVLGHALGGLVGLELALAFPEAVSALVIVNGWLSLSAWTRRCFEARERLLLDSGPAAYIAAQPLFLYPPSWAQENQPRLEAEEALHNAHFQGTENLLRRLWALKNADYRERAARVITPVQIICARDDMLVPWTCSQALHEALPHSRLDVMDFGGHACNVTAPQPFHSLLYAGLASLAPAPHKETV</sequence>
<protein>
    <recommendedName>
        <fullName evidence="1">Putative carbamate hydrolase RutD</fullName>
        <ecNumber evidence="1">3.5.1.-</ecNumber>
    </recommendedName>
    <alternativeName>
        <fullName evidence="1">Aminohydrolase</fullName>
    </alternativeName>
</protein>
<gene>
    <name evidence="1" type="primary">rutD</name>
    <name type="ordered locus">ESA_02365</name>
</gene>
<proteinExistence type="inferred from homology"/>
<reference key="1">
    <citation type="journal article" date="2010" name="PLoS ONE">
        <title>Genome sequence of Cronobacter sakazakii BAA-894 and comparative genomic hybridization analysis with other Cronobacter species.</title>
        <authorList>
            <person name="Kucerova E."/>
            <person name="Clifton S.W."/>
            <person name="Xia X.Q."/>
            <person name="Long F."/>
            <person name="Porwollik S."/>
            <person name="Fulton L."/>
            <person name="Fronick C."/>
            <person name="Minx P."/>
            <person name="Kyung K."/>
            <person name="Warren W."/>
            <person name="Fulton R."/>
            <person name="Feng D."/>
            <person name="Wollam A."/>
            <person name="Shah N."/>
            <person name="Bhonagiri V."/>
            <person name="Nash W.E."/>
            <person name="Hallsworth-Pepin K."/>
            <person name="Wilson R.K."/>
            <person name="McClelland M."/>
            <person name="Forsythe S.J."/>
        </authorList>
    </citation>
    <scope>NUCLEOTIDE SEQUENCE [LARGE SCALE GENOMIC DNA]</scope>
    <source>
        <strain>ATCC BAA-894</strain>
    </source>
</reference>
<name>RUTD_CROS8</name>
<dbReference type="EC" id="3.5.1.-" evidence="1"/>
<dbReference type="EMBL" id="CP000783">
    <property type="protein sequence ID" value="ABU77612.1"/>
    <property type="molecule type" value="Genomic_DNA"/>
</dbReference>
<dbReference type="SMR" id="A7MFY0"/>
<dbReference type="ESTHER" id="ents8-a7mfy0">
    <property type="family name" value="RutD"/>
</dbReference>
<dbReference type="KEGG" id="esa:ESA_02365"/>
<dbReference type="HOGENOM" id="CLU_020336_50_1_6"/>
<dbReference type="Proteomes" id="UP000000260">
    <property type="component" value="Chromosome"/>
</dbReference>
<dbReference type="GO" id="GO:0016020">
    <property type="term" value="C:membrane"/>
    <property type="evidence" value="ECO:0007669"/>
    <property type="project" value="TreeGrafter"/>
</dbReference>
<dbReference type="GO" id="GO:0016811">
    <property type="term" value="F:hydrolase activity, acting on carbon-nitrogen (but not peptide) bonds, in linear amides"/>
    <property type="evidence" value="ECO:0007669"/>
    <property type="project" value="InterPro"/>
</dbReference>
<dbReference type="GO" id="GO:0019740">
    <property type="term" value="P:nitrogen utilization"/>
    <property type="evidence" value="ECO:0007669"/>
    <property type="project" value="UniProtKB-UniRule"/>
</dbReference>
<dbReference type="GO" id="GO:0006212">
    <property type="term" value="P:uracil catabolic process"/>
    <property type="evidence" value="ECO:0007669"/>
    <property type="project" value="UniProtKB-UniRule"/>
</dbReference>
<dbReference type="Gene3D" id="3.40.50.1820">
    <property type="entry name" value="alpha/beta hydrolase"/>
    <property type="match status" value="1"/>
</dbReference>
<dbReference type="HAMAP" id="MF_00832">
    <property type="entry name" value="RutD"/>
    <property type="match status" value="1"/>
</dbReference>
<dbReference type="InterPro" id="IPR000073">
    <property type="entry name" value="AB_hydrolase_1"/>
</dbReference>
<dbReference type="InterPro" id="IPR029058">
    <property type="entry name" value="AB_hydrolase_fold"/>
</dbReference>
<dbReference type="InterPro" id="IPR050266">
    <property type="entry name" value="AB_hydrolase_sf"/>
</dbReference>
<dbReference type="InterPro" id="IPR019913">
    <property type="entry name" value="Pyrimidine_utilisation_RutD"/>
</dbReference>
<dbReference type="NCBIfam" id="TIGR03611">
    <property type="entry name" value="RutD"/>
    <property type="match status" value="1"/>
</dbReference>
<dbReference type="PANTHER" id="PTHR43798:SF33">
    <property type="entry name" value="HYDROLASE, PUTATIVE (AFU_ORTHOLOGUE AFUA_2G14860)-RELATED"/>
    <property type="match status" value="1"/>
</dbReference>
<dbReference type="PANTHER" id="PTHR43798">
    <property type="entry name" value="MONOACYLGLYCEROL LIPASE"/>
    <property type="match status" value="1"/>
</dbReference>
<dbReference type="Pfam" id="PF00561">
    <property type="entry name" value="Abhydrolase_1"/>
    <property type="match status" value="1"/>
</dbReference>
<dbReference type="PRINTS" id="PR00111">
    <property type="entry name" value="ABHYDROLASE"/>
</dbReference>
<dbReference type="SUPFAM" id="SSF53474">
    <property type="entry name" value="alpha/beta-Hydrolases"/>
    <property type="match status" value="1"/>
</dbReference>
<evidence type="ECO:0000255" key="1">
    <source>
        <dbReference type="HAMAP-Rule" id="MF_00832"/>
    </source>
</evidence>
<accession>A7MFY0</accession>
<organism>
    <name type="scientific">Cronobacter sakazakii (strain ATCC BAA-894)</name>
    <name type="common">Enterobacter sakazakii</name>
    <dbReference type="NCBI Taxonomy" id="290339"/>
    <lineage>
        <taxon>Bacteria</taxon>
        <taxon>Pseudomonadati</taxon>
        <taxon>Pseudomonadota</taxon>
        <taxon>Gammaproteobacteria</taxon>
        <taxon>Enterobacterales</taxon>
        <taxon>Enterobacteriaceae</taxon>
        <taxon>Cronobacter</taxon>
    </lineage>
</organism>
<keyword id="KW-0378">Hydrolase</keyword>
<keyword id="KW-1185">Reference proteome</keyword>